<sequence>MKQGIHPEYKEITATCSCGNIIKTKSTLCENIHIDVCSSCHPFYTGKQKVLDTGGRIDRFKKRFGGRMGRSS</sequence>
<keyword id="KW-0479">Metal-binding</keyword>
<keyword id="KW-1185">Reference proteome</keyword>
<keyword id="KW-0687">Ribonucleoprotein</keyword>
<keyword id="KW-0689">Ribosomal protein</keyword>
<keyword id="KW-0694">RNA-binding</keyword>
<keyword id="KW-0699">rRNA-binding</keyword>
<keyword id="KW-0862">Zinc</keyword>
<comment type="function">
    <text evidence="1">Binds the 23S rRNA.</text>
</comment>
<comment type="cofactor">
    <cofactor evidence="1">
        <name>Zn(2+)</name>
        <dbReference type="ChEBI" id="CHEBI:29105"/>
    </cofactor>
    <text evidence="1">Binds 1 zinc ion per subunit.</text>
</comment>
<comment type="subunit">
    <text evidence="1">Part of the 50S ribosomal subunit.</text>
</comment>
<comment type="similarity">
    <text evidence="1">Belongs to the bacterial ribosomal protein bL31 family. Type A subfamily.</text>
</comment>
<comment type="sequence caution" evidence="2">
    <conflict type="erroneous initiation">
        <sequence resource="EMBL-CDS" id="ABC32627"/>
    </conflict>
</comment>
<protein>
    <recommendedName>
        <fullName evidence="1">Large ribosomal subunit protein bL31</fullName>
    </recommendedName>
    <alternativeName>
        <fullName evidence="2">50S ribosomal protein L31</fullName>
    </alternativeName>
</protein>
<accession>Q2S9P7</accession>
<feature type="chain" id="PRO_0000259191" description="Large ribosomal subunit protein bL31">
    <location>
        <begin position="1"/>
        <end position="72"/>
    </location>
</feature>
<feature type="binding site" evidence="1">
    <location>
        <position position="16"/>
    </location>
    <ligand>
        <name>Zn(2+)</name>
        <dbReference type="ChEBI" id="CHEBI:29105"/>
    </ligand>
</feature>
<feature type="binding site" evidence="1">
    <location>
        <position position="18"/>
    </location>
    <ligand>
        <name>Zn(2+)</name>
        <dbReference type="ChEBI" id="CHEBI:29105"/>
    </ligand>
</feature>
<feature type="binding site" evidence="1">
    <location>
        <position position="37"/>
    </location>
    <ligand>
        <name>Zn(2+)</name>
        <dbReference type="ChEBI" id="CHEBI:29105"/>
    </ligand>
</feature>
<feature type="binding site" evidence="1">
    <location>
        <position position="40"/>
    </location>
    <ligand>
        <name>Zn(2+)</name>
        <dbReference type="ChEBI" id="CHEBI:29105"/>
    </ligand>
</feature>
<proteinExistence type="inferred from homology"/>
<evidence type="ECO:0000255" key="1">
    <source>
        <dbReference type="HAMAP-Rule" id="MF_00501"/>
    </source>
</evidence>
<evidence type="ECO:0000305" key="2"/>
<organism>
    <name type="scientific">Hahella chejuensis (strain KCTC 2396)</name>
    <dbReference type="NCBI Taxonomy" id="349521"/>
    <lineage>
        <taxon>Bacteria</taxon>
        <taxon>Pseudomonadati</taxon>
        <taxon>Pseudomonadota</taxon>
        <taxon>Gammaproteobacteria</taxon>
        <taxon>Oceanospirillales</taxon>
        <taxon>Hahellaceae</taxon>
        <taxon>Hahella</taxon>
    </lineage>
</organism>
<reference key="1">
    <citation type="journal article" date="2005" name="Nucleic Acids Res.">
        <title>Genomic blueprint of Hahella chejuensis, a marine microbe producing an algicidal agent.</title>
        <authorList>
            <person name="Jeong H."/>
            <person name="Yim J.H."/>
            <person name="Lee C."/>
            <person name="Choi S.-H."/>
            <person name="Park Y.K."/>
            <person name="Yoon S.H."/>
            <person name="Hur C.-G."/>
            <person name="Kang H.-Y."/>
            <person name="Kim D."/>
            <person name="Lee H.H."/>
            <person name="Park K.H."/>
            <person name="Park S.-H."/>
            <person name="Park H.-S."/>
            <person name="Lee H.K."/>
            <person name="Oh T.K."/>
            <person name="Kim J.F."/>
        </authorList>
    </citation>
    <scope>NUCLEOTIDE SEQUENCE [LARGE SCALE GENOMIC DNA]</scope>
    <source>
        <strain>KCTC 2396</strain>
    </source>
</reference>
<gene>
    <name evidence="1" type="primary">rpmE</name>
    <name type="ordered locus">HCH_05975</name>
</gene>
<name>RL31_HAHCH</name>
<dbReference type="EMBL" id="CP000155">
    <property type="protein sequence ID" value="ABC32627.1"/>
    <property type="status" value="ALT_INIT"/>
    <property type="molecule type" value="Genomic_DNA"/>
</dbReference>
<dbReference type="RefSeq" id="WP_041598962.1">
    <property type="nucleotide sequence ID" value="NC_007645.1"/>
</dbReference>
<dbReference type="SMR" id="Q2S9P7"/>
<dbReference type="STRING" id="349521.HCH_05975"/>
<dbReference type="KEGG" id="hch:HCH_05975"/>
<dbReference type="eggNOG" id="COG0254">
    <property type="taxonomic scope" value="Bacteria"/>
</dbReference>
<dbReference type="HOGENOM" id="CLU_2058072_0_0_6"/>
<dbReference type="OrthoDB" id="9803251at2"/>
<dbReference type="Proteomes" id="UP000000238">
    <property type="component" value="Chromosome"/>
</dbReference>
<dbReference type="GO" id="GO:1990904">
    <property type="term" value="C:ribonucleoprotein complex"/>
    <property type="evidence" value="ECO:0007669"/>
    <property type="project" value="UniProtKB-KW"/>
</dbReference>
<dbReference type="GO" id="GO:0005840">
    <property type="term" value="C:ribosome"/>
    <property type="evidence" value="ECO:0007669"/>
    <property type="project" value="UniProtKB-KW"/>
</dbReference>
<dbReference type="GO" id="GO:0046872">
    <property type="term" value="F:metal ion binding"/>
    <property type="evidence" value="ECO:0007669"/>
    <property type="project" value="UniProtKB-KW"/>
</dbReference>
<dbReference type="GO" id="GO:0019843">
    <property type="term" value="F:rRNA binding"/>
    <property type="evidence" value="ECO:0007669"/>
    <property type="project" value="UniProtKB-KW"/>
</dbReference>
<dbReference type="GO" id="GO:0003735">
    <property type="term" value="F:structural constituent of ribosome"/>
    <property type="evidence" value="ECO:0007669"/>
    <property type="project" value="InterPro"/>
</dbReference>
<dbReference type="GO" id="GO:0006412">
    <property type="term" value="P:translation"/>
    <property type="evidence" value="ECO:0007669"/>
    <property type="project" value="UniProtKB-UniRule"/>
</dbReference>
<dbReference type="Gene3D" id="4.10.830.30">
    <property type="entry name" value="Ribosomal protein L31"/>
    <property type="match status" value="1"/>
</dbReference>
<dbReference type="HAMAP" id="MF_00501">
    <property type="entry name" value="Ribosomal_bL31_1"/>
    <property type="match status" value="1"/>
</dbReference>
<dbReference type="InterPro" id="IPR034704">
    <property type="entry name" value="Ribosomal_bL28/bL31-like_sf"/>
</dbReference>
<dbReference type="InterPro" id="IPR002150">
    <property type="entry name" value="Ribosomal_bL31"/>
</dbReference>
<dbReference type="InterPro" id="IPR027491">
    <property type="entry name" value="Ribosomal_bL31_A"/>
</dbReference>
<dbReference type="InterPro" id="IPR042105">
    <property type="entry name" value="Ribosomal_bL31_sf"/>
</dbReference>
<dbReference type="NCBIfam" id="TIGR00105">
    <property type="entry name" value="L31"/>
    <property type="match status" value="1"/>
</dbReference>
<dbReference type="NCBIfam" id="NF000612">
    <property type="entry name" value="PRK00019.1"/>
    <property type="match status" value="1"/>
</dbReference>
<dbReference type="NCBIfam" id="NF001809">
    <property type="entry name" value="PRK00528.1"/>
    <property type="match status" value="1"/>
</dbReference>
<dbReference type="PANTHER" id="PTHR33280">
    <property type="entry name" value="50S RIBOSOMAL PROTEIN L31, CHLOROPLASTIC"/>
    <property type="match status" value="1"/>
</dbReference>
<dbReference type="PANTHER" id="PTHR33280:SF6">
    <property type="entry name" value="LARGE RIBOSOMAL SUBUNIT PROTEIN BL31A"/>
    <property type="match status" value="1"/>
</dbReference>
<dbReference type="Pfam" id="PF01197">
    <property type="entry name" value="Ribosomal_L31"/>
    <property type="match status" value="1"/>
</dbReference>
<dbReference type="PRINTS" id="PR01249">
    <property type="entry name" value="RIBOSOMALL31"/>
</dbReference>
<dbReference type="SUPFAM" id="SSF143800">
    <property type="entry name" value="L28p-like"/>
    <property type="match status" value="1"/>
</dbReference>
<dbReference type="PROSITE" id="PS01143">
    <property type="entry name" value="RIBOSOMAL_L31"/>
    <property type="match status" value="1"/>
</dbReference>